<accession>C0HL11</accession>
<sequence>FLGSIIGALAKGLPSLIALIKK</sequence>
<comment type="function">
    <text evidence="2">Antimicrobial peptide.</text>
</comment>
<comment type="subcellular location">
    <subcellularLocation>
        <location evidence="1">Secreted</location>
    </subcellularLocation>
</comment>
<comment type="tissue specificity">
    <text evidence="6">Expressed by the skin glands.</text>
</comment>
<comment type="mass spectrometry"/>
<comment type="similarity">
    <text evidence="4">Belongs to the frog skin active peptide (FSAP) family. Brevinin subfamily.</text>
</comment>
<protein>
    <recommendedName>
        <fullName evidence="4">Brevinin-1OKd</fullName>
    </recommendedName>
</protein>
<dbReference type="GO" id="GO:0005576">
    <property type="term" value="C:extracellular region"/>
    <property type="evidence" value="ECO:0000314"/>
    <property type="project" value="UniProtKB"/>
</dbReference>
<evidence type="ECO:0000250" key="1">
    <source>
        <dbReference type="UniProtKB" id="A7WNV4"/>
    </source>
</evidence>
<evidence type="ECO:0000250" key="2">
    <source>
        <dbReference type="UniProtKB" id="C0HL10"/>
    </source>
</evidence>
<evidence type="ECO:0000269" key="3">
    <source>
    </source>
</evidence>
<evidence type="ECO:0000303" key="4">
    <source>
    </source>
</evidence>
<evidence type="ECO:0000305" key="5"/>
<evidence type="ECO:0000305" key="6">
    <source>
    </source>
</evidence>
<feature type="peptide" id="PRO_0000443440" description="Brevinin-1OKd" evidence="3">
    <location>
        <begin position="1"/>
        <end position="22"/>
    </location>
</feature>
<feature type="modified residue" description="Lysine amide" evidence="3">
    <location>
        <position position="22"/>
    </location>
</feature>
<keyword id="KW-0027">Amidation</keyword>
<keyword id="KW-0929">Antimicrobial</keyword>
<keyword id="KW-0903">Direct protein sequencing</keyword>
<keyword id="KW-0964">Secreted</keyword>
<organism evidence="4">
    <name type="scientific">Nidirana okinavana</name>
    <name type="common">Kampira Falls frog</name>
    <name type="synonym">Babina okinavana</name>
    <dbReference type="NCBI Taxonomy" id="156870"/>
    <lineage>
        <taxon>Eukaryota</taxon>
        <taxon>Metazoa</taxon>
        <taxon>Chordata</taxon>
        <taxon>Craniata</taxon>
        <taxon>Vertebrata</taxon>
        <taxon>Euteleostomi</taxon>
        <taxon>Amphibia</taxon>
        <taxon>Batrachia</taxon>
        <taxon>Anura</taxon>
        <taxon>Neobatrachia</taxon>
        <taxon>Ranoidea</taxon>
        <taxon>Ranidae</taxon>
        <taxon>Nidirana</taxon>
    </lineage>
</organism>
<name>BR1D_NIDOK</name>
<proteinExistence type="evidence at protein level"/>
<reference evidence="5" key="1">
    <citation type="journal article" date="2005" name="Peptides">
        <title>A family of acyclic brevinin-1 peptides from the skin of the Ryukyu brown frog Rana okinavana.</title>
        <authorList>
            <person name="Conlon J.M."/>
            <person name="Sonnevend A."/>
            <person name="Jouenne T."/>
            <person name="Coquet L."/>
            <person name="Cosquer D."/>
            <person name="Vaudry H."/>
            <person name="Iwamuro S."/>
        </authorList>
    </citation>
    <scope>PROTEIN SEQUENCE</scope>
    <scope>MASS SPECTROMETRY</scope>
    <scope>AMIDATION AT LYS-22</scope>
    <source>
        <tissue evidence="4">Skin</tissue>
    </source>
</reference>